<organism>
    <name type="scientific">Macrococcus caseolyticus (strain JCSC5402)</name>
    <name type="common">Macrococcoides caseolyticum</name>
    <dbReference type="NCBI Taxonomy" id="458233"/>
    <lineage>
        <taxon>Bacteria</taxon>
        <taxon>Bacillati</taxon>
        <taxon>Bacillota</taxon>
        <taxon>Bacilli</taxon>
        <taxon>Bacillales</taxon>
        <taxon>Staphylococcaceae</taxon>
        <taxon>Macrococcoides</taxon>
    </lineage>
</organism>
<gene>
    <name evidence="1" type="primary">mutS</name>
    <name type="ordered locus">MCCL_0888</name>
</gene>
<name>MUTS_MACCJ</name>
<dbReference type="EMBL" id="AP009484">
    <property type="protein sequence ID" value="BAH17595.1"/>
    <property type="molecule type" value="Genomic_DNA"/>
</dbReference>
<dbReference type="RefSeq" id="WP_012656795.1">
    <property type="nucleotide sequence ID" value="NC_011999.1"/>
</dbReference>
<dbReference type="SMR" id="B9EBI4"/>
<dbReference type="STRING" id="458233.MCCL_0888"/>
<dbReference type="KEGG" id="mcl:MCCL_0888"/>
<dbReference type="eggNOG" id="COG0249">
    <property type="taxonomic scope" value="Bacteria"/>
</dbReference>
<dbReference type="HOGENOM" id="CLU_002472_3_1_9"/>
<dbReference type="OrthoDB" id="9802448at2"/>
<dbReference type="Proteomes" id="UP000001383">
    <property type="component" value="Chromosome"/>
</dbReference>
<dbReference type="GO" id="GO:0005829">
    <property type="term" value="C:cytosol"/>
    <property type="evidence" value="ECO:0007669"/>
    <property type="project" value="TreeGrafter"/>
</dbReference>
<dbReference type="GO" id="GO:0005524">
    <property type="term" value="F:ATP binding"/>
    <property type="evidence" value="ECO:0007669"/>
    <property type="project" value="UniProtKB-UniRule"/>
</dbReference>
<dbReference type="GO" id="GO:0140664">
    <property type="term" value="F:ATP-dependent DNA damage sensor activity"/>
    <property type="evidence" value="ECO:0007669"/>
    <property type="project" value="InterPro"/>
</dbReference>
<dbReference type="GO" id="GO:0003684">
    <property type="term" value="F:damaged DNA binding"/>
    <property type="evidence" value="ECO:0007669"/>
    <property type="project" value="UniProtKB-UniRule"/>
</dbReference>
<dbReference type="GO" id="GO:0030983">
    <property type="term" value="F:mismatched DNA binding"/>
    <property type="evidence" value="ECO:0007669"/>
    <property type="project" value="InterPro"/>
</dbReference>
<dbReference type="GO" id="GO:0006298">
    <property type="term" value="P:mismatch repair"/>
    <property type="evidence" value="ECO:0007669"/>
    <property type="project" value="UniProtKB-UniRule"/>
</dbReference>
<dbReference type="CDD" id="cd03284">
    <property type="entry name" value="ABC_MutS1"/>
    <property type="match status" value="1"/>
</dbReference>
<dbReference type="FunFam" id="1.10.1420.10:FF:000007">
    <property type="entry name" value="DNA mismatch repair protein MutS"/>
    <property type="match status" value="1"/>
</dbReference>
<dbReference type="FunFam" id="3.40.1170.10:FF:000001">
    <property type="entry name" value="DNA mismatch repair protein MutS"/>
    <property type="match status" value="1"/>
</dbReference>
<dbReference type="FunFam" id="3.40.50.300:FF:000896">
    <property type="entry name" value="DNA mismatch repair protein MutS"/>
    <property type="match status" value="1"/>
</dbReference>
<dbReference type="Gene3D" id="1.10.1420.10">
    <property type="match status" value="2"/>
</dbReference>
<dbReference type="Gene3D" id="3.40.1170.10">
    <property type="entry name" value="DNA repair protein MutS, domain I"/>
    <property type="match status" value="1"/>
</dbReference>
<dbReference type="Gene3D" id="3.30.420.110">
    <property type="entry name" value="MutS, connector domain"/>
    <property type="match status" value="1"/>
</dbReference>
<dbReference type="Gene3D" id="3.40.50.300">
    <property type="entry name" value="P-loop containing nucleotide triphosphate hydrolases"/>
    <property type="match status" value="1"/>
</dbReference>
<dbReference type="HAMAP" id="MF_00096">
    <property type="entry name" value="MutS"/>
    <property type="match status" value="1"/>
</dbReference>
<dbReference type="InterPro" id="IPR005748">
    <property type="entry name" value="DNA_mismatch_repair_MutS"/>
</dbReference>
<dbReference type="InterPro" id="IPR007695">
    <property type="entry name" value="DNA_mismatch_repair_MutS-lik_N"/>
</dbReference>
<dbReference type="InterPro" id="IPR017261">
    <property type="entry name" value="DNA_mismatch_repair_MutS/MSH"/>
</dbReference>
<dbReference type="InterPro" id="IPR000432">
    <property type="entry name" value="DNA_mismatch_repair_MutS_C"/>
</dbReference>
<dbReference type="InterPro" id="IPR007861">
    <property type="entry name" value="DNA_mismatch_repair_MutS_clamp"/>
</dbReference>
<dbReference type="InterPro" id="IPR007696">
    <property type="entry name" value="DNA_mismatch_repair_MutS_core"/>
</dbReference>
<dbReference type="InterPro" id="IPR016151">
    <property type="entry name" value="DNA_mismatch_repair_MutS_N"/>
</dbReference>
<dbReference type="InterPro" id="IPR036187">
    <property type="entry name" value="DNA_mismatch_repair_MutS_sf"/>
</dbReference>
<dbReference type="InterPro" id="IPR007860">
    <property type="entry name" value="DNA_mmatch_repair_MutS_con_dom"/>
</dbReference>
<dbReference type="InterPro" id="IPR045076">
    <property type="entry name" value="MutS"/>
</dbReference>
<dbReference type="InterPro" id="IPR036678">
    <property type="entry name" value="MutS_con_dom_sf"/>
</dbReference>
<dbReference type="InterPro" id="IPR027417">
    <property type="entry name" value="P-loop_NTPase"/>
</dbReference>
<dbReference type="NCBIfam" id="TIGR01070">
    <property type="entry name" value="mutS1"/>
    <property type="match status" value="1"/>
</dbReference>
<dbReference type="NCBIfam" id="NF003810">
    <property type="entry name" value="PRK05399.1"/>
    <property type="match status" value="1"/>
</dbReference>
<dbReference type="PANTHER" id="PTHR11361:SF34">
    <property type="entry name" value="DNA MISMATCH REPAIR PROTEIN MSH1, MITOCHONDRIAL"/>
    <property type="match status" value="1"/>
</dbReference>
<dbReference type="PANTHER" id="PTHR11361">
    <property type="entry name" value="DNA MISMATCH REPAIR PROTEIN MUTS FAMILY MEMBER"/>
    <property type="match status" value="1"/>
</dbReference>
<dbReference type="Pfam" id="PF01624">
    <property type="entry name" value="MutS_I"/>
    <property type="match status" value="1"/>
</dbReference>
<dbReference type="Pfam" id="PF05188">
    <property type="entry name" value="MutS_II"/>
    <property type="match status" value="1"/>
</dbReference>
<dbReference type="Pfam" id="PF05192">
    <property type="entry name" value="MutS_III"/>
    <property type="match status" value="1"/>
</dbReference>
<dbReference type="Pfam" id="PF05190">
    <property type="entry name" value="MutS_IV"/>
    <property type="match status" value="1"/>
</dbReference>
<dbReference type="Pfam" id="PF00488">
    <property type="entry name" value="MutS_V"/>
    <property type="match status" value="1"/>
</dbReference>
<dbReference type="PIRSF" id="PIRSF037677">
    <property type="entry name" value="DNA_mis_repair_Msh6"/>
    <property type="match status" value="1"/>
</dbReference>
<dbReference type="SMART" id="SM00534">
    <property type="entry name" value="MUTSac"/>
    <property type="match status" value="1"/>
</dbReference>
<dbReference type="SMART" id="SM00533">
    <property type="entry name" value="MUTSd"/>
    <property type="match status" value="1"/>
</dbReference>
<dbReference type="SUPFAM" id="SSF55271">
    <property type="entry name" value="DNA repair protein MutS, domain I"/>
    <property type="match status" value="1"/>
</dbReference>
<dbReference type="SUPFAM" id="SSF53150">
    <property type="entry name" value="DNA repair protein MutS, domain II"/>
    <property type="match status" value="1"/>
</dbReference>
<dbReference type="SUPFAM" id="SSF48334">
    <property type="entry name" value="DNA repair protein MutS, domain III"/>
    <property type="match status" value="1"/>
</dbReference>
<dbReference type="SUPFAM" id="SSF52540">
    <property type="entry name" value="P-loop containing nucleoside triphosphate hydrolases"/>
    <property type="match status" value="1"/>
</dbReference>
<dbReference type="PROSITE" id="PS00486">
    <property type="entry name" value="DNA_MISMATCH_REPAIR_2"/>
    <property type="match status" value="1"/>
</dbReference>
<evidence type="ECO:0000255" key="1">
    <source>
        <dbReference type="HAMAP-Rule" id="MF_00096"/>
    </source>
</evidence>
<keyword id="KW-0067">ATP-binding</keyword>
<keyword id="KW-0227">DNA damage</keyword>
<keyword id="KW-0234">DNA repair</keyword>
<keyword id="KW-0238">DNA-binding</keyword>
<keyword id="KW-0547">Nucleotide-binding</keyword>
<keyword id="KW-1185">Reference proteome</keyword>
<protein>
    <recommendedName>
        <fullName evidence="1">DNA mismatch repair protein MutS</fullName>
    </recommendedName>
</protein>
<reference key="1">
    <citation type="journal article" date="2009" name="J. Bacteriol.">
        <title>Complete genome sequence of Macrococcus caseolyticus strain JCSCS5402, reflecting the ancestral genome of the human-pathogenic staphylococci.</title>
        <authorList>
            <person name="Baba T."/>
            <person name="Kuwahara-Arai K."/>
            <person name="Uchiyama I."/>
            <person name="Takeuchi F."/>
            <person name="Ito T."/>
            <person name="Hiramatsu K."/>
        </authorList>
    </citation>
    <scope>NUCLEOTIDE SEQUENCE [LARGE SCALE GENOMIC DNA]</scope>
    <source>
        <strain>JCSC5402</strain>
    </source>
</reference>
<sequence>MSKPTPMMTQYLQMKEQYKDCILFFRLGDFYEMFYEDAELTAKELEITLTRRDKKNNIPMCGVPHHSAKVYIERLIEKGYKVAIAEQMEDPKQVKGMVKREVVKIITPGTVMDDMISENESNYIASIHHEEGFTLAYSDVSTGELKVTQLNEDEMLNELSSVNPKEIITNIDLNEVLINKIKMITDVISRFEVNDTFKQADGVDQSLQPAVNLLLSYIQYTQMRALAHIDEAVYYEPVHYMRLDMYAKRNLELTESIRHKNKKGTLLSIFNQCKTPMGNRLVKEWIERPLLNRQEIEERHNGVELFNDNFILRHQLREALTHVYDIERLAGRVQFGNVSAKDLVQLKYSLEQLPMIQSLLKEHDEVIRTLDNIDALQPLYDMLEASLLDEAPTSIKDGGIFKDGFNNDVDELRYASKNGKQWLNELQAKERERTGVKSLKIGYNKVFGYYIEISKANLVNLDVDAFGYTRKQTLSNAERFITEELKEKESLILGAEEKLMNLEYELFIQLRDFVKTFILNLKQQAKNIAVLDCLQNFSEVATKHQYIKPIISGTKVLNIEDARHPVVETVMERDQYVANDCKLDDHTFIYLITGPNMSGKSTYMRQVALISIMAQMGAFVPASYAEVPIFDQIFTRIGAADDLVSGQSTFMVEMLEAKNALQNATDNSLIIFDEIGRGTSTYDGLSLAQSMIEYVHNKIGAKTLFSTHYHELVDLEQTLDGLNNIHVAAKEYNGELIFLHKVMPGAVEHSYGIHVAKLAQLPAEIIERSSELLDEFEHNEKVRKGDSNKIIQPSFNLFEIENENTNKYNANHEHDLIIQQIKDISIDELTPIEALLKLQEIKSRIK</sequence>
<accession>B9EBI4</accession>
<comment type="function">
    <text evidence="1">This protein is involved in the repair of mismatches in DNA. It is possible that it carries out the mismatch recognition step. This protein has a weak ATPase activity.</text>
</comment>
<comment type="similarity">
    <text evidence="1">Belongs to the DNA mismatch repair MutS family.</text>
</comment>
<proteinExistence type="inferred from homology"/>
<feature type="chain" id="PRO_1000118687" description="DNA mismatch repair protein MutS">
    <location>
        <begin position="1"/>
        <end position="846"/>
    </location>
</feature>
<feature type="binding site" evidence="1">
    <location>
        <begin position="594"/>
        <end position="601"/>
    </location>
    <ligand>
        <name>ATP</name>
        <dbReference type="ChEBI" id="CHEBI:30616"/>
    </ligand>
</feature>